<dbReference type="EMBL" id="U31784">
    <property type="protein sequence ID" value="AAA79435.1"/>
    <property type="molecule type" value="Genomic_DNA"/>
</dbReference>
<dbReference type="EMBL" id="U12503">
    <property type="protein sequence ID" value="AAA67247.1"/>
    <property type="molecule type" value="Genomic_DNA"/>
</dbReference>
<dbReference type="SMR" id="P50792"/>
<dbReference type="Proteomes" id="UP000009115">
    <property type="component" value="Segment"/>
</dbReference>
<dbReference type="GO" id="GO:0042025">
    <property type="term" value="C:host cell nucleus"/>
    <property type="evidence" value="ECO:0007669"/>
    <property type="project" value="UniProtKB-SubCell"/>
</dbReference>
<dbReference type="GO" id="GO:0039620">
    <property type="term" value="C:T=7 icosahedral viral capsid"/>
    <property type="evidence" value="ECO:0007669"/>
    <property type="project" value="UniProtKB-UniRule"/>
</dbReference>
<dbReference type="GO" id="GO:0005198">
    <property type="term" value="F:structural molecule activity"/>
    <property type="evidence" value="ECO:0007669"/>
    <property type="project" value="UniProtKB-UniRule"/>
</dbReference>
<dbReference type="GO" id="GO:0075509">
    <property type="term" value="P:endocytosis involved in viral entry into host cell"/>
    <property type="evidence" value="ECO:0007669"/>
    <property type="project" value="UniProtKB-KW"/>
</dbReference>
<dbReference type="GO" id="GO:0019062">
    <property type="term" value="P:virion attachment to host cell"/>
    <property type="evidence" value="ECO:0007669"/>
    <property type="project" value="UniProtKB-UniRule"/>
</dbReference>
<dbReference type="Gene3D" id="2.60.175.20">
    <property type="entry name" value="Major capsid L1 (late) superfamily, Papillomavirus"/>
    <property type="match status" value="2"/>
</dbReference>
<dbReference type="HAMAP" id="MF_04002">
    <property type="entry name" value="PPV_L1"/>
    <property type="match status" value="1"/>
</dbReference>
<dbReference type="InterPro" id="IPR002210">
    <property type="entry name" value="Capsid_L1_Papillomavir"/>
</dbReference>
<dbReference type="InterPro" id="IPR036973">
    <property type="entry name" value="Capsid_L1_sf_Papillomavir"/>
</dbReference>
<dbReference type="InterPro" id="IPR011222">
    <property type="entry name" value="dsDNA_vir_gr_I_capsid"/>
</dbReference>
<dbReference type="Pfam" id="PF00500">
    <property type="entry name" value="Late_protein_L1"/>
    <property type="match status" value="1"/>
</dbReference>
<dbReference type="PRINTS" id="PR00865">
    <property type="entry name" value="HPVCAPSIDL1"/>
</dbReference>
<dbReference type="SUPFAM" id="SSF88648">
    <property type="entry name" value="Group I dsDNA viruses"/>
    <property type="match status" value="1"/>
</dbReference>
<evidence type="ECO:0000255" key="1">
    <source>
        <dbReference type="HAMAP-Rule" id="MF_04002"/>
    </source>
</evidence>
<evidence type="ECO:0000256" key="2">
    <source>
        <dbReference type="SAM" id="MobiDB-lite"/>
    </source>
</evidence>
<protein>
    <recommendedName>
        <fullName evidence="1">Major capsid protein L1</fullName>
    </recommendedName>
</protein>
<proteinExistence type="inferred from homology"/>
<organismHost>
    <name type="scientific">Homo sapiens</name>
    <name type="common">Human</name>
    <dbReference type="NCBI Taxonomy" id="9606"/>
</organismHost>
<comment type="function">
    <text evidence="1">Forms an icosahedral capsid with a T=7 symmetry and a 50 nm diameter. The capsid is composed of 72 pentamers linked to each other by disulfide bonds and associated with L2 proteins. Binds to heparan sulfate proteoglycans on cell surface of basal layer keratinocytes to provide initial virion attachment. This binding mediates a conformational change in the virus capsid that facilitates efficient infection. The virion enters the host cell via endocytosis. During virus trafficking, L1 protein dissociates from the viral DNA and the genomic DNA is released to the host nucleus. The virion assembly takes place within the cell nucleus. Encapsulates the genomic DNA together with protein L2.</text>
</comment>
<comment type="subunit">
    <text evidence="1">Self-assembles into homopentamers. The capsid has an icosahedral symmetry and consists of 72 capsomers, with each capsomer being a pentamer of L1. Interacts with the minor capsid protein L2; this interaction is necessary for viral genome encapsidation. Interacts with protein E2; this interaction enhances E2-dependent replication and transcription activation.</text>
</comment>
<comment type="subcellular location">
    <subcellularLocation>
        <location evidence="1">Virion</location>
    </subcellularLocation>
    <subcellularLocation>
        <location evidence="1">Host nucleus</location>
    </subcellularLocation>
</comment>
<comment type="similarity">
    <text evidence="1">Belongs to the papillomaviridae L1 protein family.</text>
</comment>
<feature type="chain" id="PRO_0000133513" description="Major capsid protein L1">
    <location>
        <begin position="1"/>
        <end position="503"/>
    </location>
</feature>
<feature type="region of interest" description="Disordered" evidence="2">
    <location>
        <begin position="480"/>
        <end position="503"/>
    </location>
</feature>
<feature type="disulfide bond" description="Interchain (with C-429)" evidence="1">
    <location>
        <position position="175"/>
    </location>
</feature>
<feature type="disulfide bond" description="Interchain (with C-175)" evidence="1">
    <location>
        <position position="429"/>
    </location>
</feature>
<accession>P50792</accession>
<reference key="1">
    <citation type="submission" date="1995-10" db="EMBL/GenBank/DDBJ databases">
        <authorList>
            <person name="Delius H."/>
        </authorList>
    </citation>
    <scope>NUCLEOTIDE SEQUENCE [GENOMIC DNA]</scope>
</reference>
<reference key="2">
    <citation type="journal article" date="1994" name="J. Infect. Dis.">
        <title>Identification and assessment of known and novel human papillomaviruses by polymerase chain reaction amplification, restriction fragment length polymorphisms, nucleotide sequence, and phylogenetic algorithms.</title>
        <authorList>
            <person name="Bernard H.U."/>
            <person name="Chan S.-Y."/>
            <person name="Manos M.M."/>
            <person name="Ong C.K."/>
            <person name="Villa L.L."/>
            <person name="Delius H."/>
            <person name="Peyton C.L."/>
            <person name="Bauer H.M."/>
            <person name="Wheeler C.M."/>
        </authorList>
    </citation>
    <scope>NUCLEOTIDE SEQUENCE [GENOMIC DNA] OF 316-467</scope>
</reference>
<sequence>MALWRSSDNLVYLPPTPVSKVISTDDYVTRTNIYYYAGSSRLLTVGHPHYSIPKSSGNKVDVPKVSAFQYRVFRVRLPDPNKFGLPDARIYNPEAERLVWACTGVEVGRGQPLGVGLSGHPLYNKLNDTENSNIAHAENGQDSRDNIAVDYKQTQLCILGCTPPMGEHWGKGTVCARTSSAAGDCPPLELMTTHIEDGDMVDTGYGAMDFAALQVNKSDVPLDICQSTCKYPDYLGMAADPYGDSMFFFLRREQLFARHFFNRAGVVGDKIPDSLYLKGNNGRETPGSAIYSPTPSGSMVTSEAQIFNKPYWLQQAQGHNNGICWANQVFLTVVDTTRSTNMSLCATTESQPLTTYDATKIKEYLRHGEEYDLQFIFQLCKVTLTPEIMAYLHTMNSALLEDWNFGLTLPPSTSLEDTYRFVTSSAITCQKDLAPTEKQDPYAKLNFWDVDLKDRFTLDLSQFPLGRKFLLQIGARRRSVVPSRKRRTTTTAPTPAKRKRSKK</sequence>
<organism>
    <name type="scientific">Human papillomavirus 29</name>
    <dbReference type="NCBI Taxonomy" id="37112"/>
    <lineage>
        <taxon>Viruses</taxon>
        <taxon>Monodnaviria</taxon>
        <taxon>Shotokuvirae</taxon>
        <taxon>Cossaviricota</taxon>
        <taxon>Papovaviricetes</taxon>
        <taxon>Zurhausenvirales</taxon>
        <taxon>Papillomaviridae</taxon>
        <taxon>Firstpapillomavirinae</taxon>
        <taxon>Alphapapillomavirus</taxon>
        <taxon>Alphapapillomavirus 2</taxon>
    </lineage>
</organism>
<keyword id="KW-0167">Capsid protein</keyword>
<keyword id="KW-1015">Disulfide bond</keyword>
<keyword id="KW-1048">Host nucleus</keyword>
<keyword id="KW-0945">Host-virus interaction</keyword>
<keyword id="KW-0426">Late protein</keyword>
<keyword id="KW-1185">Reference proteome</keyword>
<keyword id="KW-1145">T=7 icosahedral capsid protein</keyword>
<keyword id="KW-1161">Viral attachment to host cell</keyword>
<keyword id="KW-1162">Viral penetration into host cytoplasm</keyword>
<keyword id="KW-0946">Virion</keyword>
<keyword id="KW-1164">Virus endocytosis by host</keyword>
<keyword id="KW-1160">Virus entry into host cell</keyword>
<name>VL1_HPV29</name>
<gene>
    <name evidence="1" type="primary">L1</name>
</gene>